<comment type="subcellular location">
    <subcellularLocation>
        <location evidence="3">Cell membrane</location>
        <topology evidence="3">Single-pass type I membrane protein</topology>
    </subcellularLocation>
</comment>
<comment type="similarity">
    <text evidence="3">Belongs to the CD300 family.</text>
</comment>
<organism>
    <name type="scientific">Mus musculus</name>
    <name type="common">Mouse</name>
    <dbReference type="NCBI Taxonomy" id="10090"/>
    <lineage>
        <taxon>Eukaryota</taxon>
        <taxon>Metazoa</taxon>
        <taxon>Chordata</taxon>
        <taxon>Craniata</taxon>
        <taxon>Vertebrata</taxon>
        <taxon>Euteleostomi</taxon>
        <taxon>Mammalia</taxon>
        <taxon>Eutheria</taxon>
        <taxon>Euarchontoglires</taxon>
        <taxon>Glires</taxon>
        <taxon>Rodentia</taxon>
        <taxon>Myomorpha</taxon>
        <taxon>Muroidea</taxon>
        <taxon>Muridae</taxon>
        <taxon>Murinae</taxon>
        <taxon>Mus</taxon>
        <taxon>Mus</taxon>
    </lineage>
</organism>
<keyword id="KW-1003">Cell membrane</keyword>
<keyword id="KW-1015">Disulfide bond</keyword>
<keyword id="KW-0325">Glycoprotein</keyword>
<keyword id="KW-0391">Immunity</keyword>
<keyword id="KW-0393">Immunoglobulin domain</keyword>
<keyword id="KW-0472">Membrane</keyword>
<keyword id="KW-0675">Receptor</keyword>
<keyword id="KW-1185">Reference proteome</keyword>
<keyword id="KW-0732">Signal</keyword>
<keyword id="KW-0812">Transmembrane</keyword>
<keyword id="KW-1133">Transmembrane helix</keyword>
<evidence type="ECO:0000255" key="1"/>
<evidence type="ECO:0000255" key="2">
    <source>
        <dbReference type="PROSITE-ProRule" id="PRU00114"/>
    </source>
</evidence>
<evidence type="ECO:0000305" key="3"/>
<sequence length="229" mass="25336">MNPRVIRLWLPSAVLLSLVPGHFPVRGPSTVTGTVGESLSVSCQYEKKLKTKKKIWCKWKSNVLCKDIVKTSASEEARNGRVSIRDHPDNLTFTVTLENLTLEDAGTYMCMVDIGFFYDAYLQIDKSFKVEVFVVPGKPPFKGSRPGNGINILASPTSSAVHTQPNVTTDDTIPAPSPELRSLLSSPHFWILVSLKLPLFLSMLGALLWVNRPQRCSGGSSAWPCYENQ</sequence>
<dbReference type="EMBL" id="AY457052">
    <property type="protein sequence ID" value="AAR27943.1"/>
    <property type="molecule type" value="mRNA"/>
</dbReference>
<dbReference type="EMBL" id="AL607025">
    <property type="status" value="NOT_ANNOTATED_CDS"/>
    <property type="molecule type" value="Genomic_DNA"/>
</dbReference>
<dbReference type="RefSeq" id="NP_954695.1">
    <property type="nucleotide sequence ID" value="NM_199225.1"/>
</dbReference>
<dbReference type="SMR" id="A2A7V7"/>
<dbReference type="FunCoup" id="A2A7V7">
    <property type="interactions" value="1265"/>
</dbReference>
<dbReference type="STRING" id="10090.ENSMUSP00000090123"/>
<dbReference type="GlyCosmos" id="A2A7V7">
    <property type="glycosylation" value="2 sites, No reported glycans"/>
</dbReference>
<dbReference type="GlyGen" id="A2A7V7">
    <property type="glycosylation" value="2 sites"/>
</dbReference>
<dbReference type="PhosphoSitePlus" id="A2A7V7"/>
<dbReference type="PaxDb" id="10090-ENSMUSP00000090123"/>
<dbReference type="DNASU" id="387565"/>
<dbReference type="UCSC" id="uc007mgc.1">
    <property type="organism name" value="mouse"/>
</dbReference>
<dbReference type="AGR" id="MGI:3032626"/>
<dbReference type="MGI" id="MGI:3032626">
    <property type="gene designation" value="Cd300c"/>
</dbReference>
<dbReference type="eggNOG" id="ENOG502S8BD">
    <property type="taxonomic scope" value="Eukaryota"/>
</dbReference>
<dbReference type="InParanoid" id="A2A7V7"/>
<dbReference type="PhylomeDB" id="A2A7V7"/>
<dbReference type="Reactome" id="R-MMU-198933">
    <property type="pathway name" value="Immunoregulatory interactions between a Lymphoid and a non-Lymphoid cell"/>
</dbReference>
<dbReference type="BioGRID-ORCS" id="387565">
    <property type="hits" value="1 hit in 22 CRISPR screens"/>
</dbReference>
<dbReference type="ChiTaRS" id="Cd300c">
    <property type="organism name" value="mouse"/>
</dbReference>
<dbReference type="PRO" id="PR:A2A7V7"/>
<dbReference type="Proteomes" id="UP000000589">
    <property type="component" value="Unplaced"/>
</dbReference>
<dbReference type="RNAct" id="A2A7V7">
    <property type="molecule type" value="protein"/>
</dbReference>
<dbReference type="GO" id="GO:0005886">
    <property type="term" value="C:plasma membrane"/>
    <property type="evidence" value="ECO:0007669"/>
    <property type="project" value="UniProtKB-SubCell"/>
</dbReference>
<dbReference type="GO" id="GO:0002376">
    <property type="term" value="P:immune system process"/>
    <property type="evidence" value="ECO:0007669"/>
    <property type="project" value="UniProtKB-KW"/>
</dbReference>
<dbReference type="CDD" id="cd05716">
    <property type="entry name" value="IgV_pIgR_like"/>
    <property type="match status" value="1"/>
</dbReference>
<dbReference type="FunFam" id="2.60.40.10:FF:000370">
    <property type="entry name" value="CMRF35-like molecule 1"/>
    <property type="match status" value="1"/>
</dbReference>
<dbReference type="Gene3D" id="2.60.40.10">
    <property type="entry name" value="Immunoglobulins"/>
    <property type="match status" value="1"/>
</dbReference>
<dbReference type="InterPro" id="IPR050671">
    <property type="entry name" value="CD300_family_receptors"/>
</dbReference>
<dbReference type="InterPro" id="IPR007110">
    <property type="entry name" value="Ig-like_dom"/>
</dbReference>
<dbReference type="InterPro" id="IPR036179">
    <property type="entry name" value="Ig-like_dom_sf"/>
</dbReference>
<dbReference type="InterPro" id="IPR013783">
    <property type="entry name" value="Ig-like_fold"/>
</dbReference>
<dbReference type="InterPro" id="IPR003599">
    <property type="entry name" value="Ig_sub"/>
</dbReference>
<dbReference type="InterPro" id="IPR013106">
    <property type="entry name" value="Ig_V-set"/>
</dbReference>
<dbReference type="PANTHER" id="PTHR11860">
    <property type="entry name" value="POLYMERIC-IMMUNOGLOBULIN RECEPTOR"/>
    <property type="match status" value="1"/>
</dbReference>
<dbReference type="PANTHER" id="PTHR11860:SF117">
    <property type="entry name" value="PROTEIN CD300H"/>
    <property type="match status" value="1"/>
</dbReference>
<dbReference type="Pfam" id="PF07686">
    <property type="entry name" value="V-set"/>
    <property type="match status" value="1"/>
</dbReference>
<dbReference type="SMART" id="SM00409">
    <property type="entry name" value="IG"/>
    <property type="match status" value="1"/>
</dbReference>
<dbReference type="SUPFAM" id="SSF48726">
    <property type="entry name" value="Immunoglobulin"/>
    <property type="match status" value="1"/>
</dbReference>
<dbReference type="PROSITE" id="PS50835">
    <property type="entry name" value="IG_LIKE"/>
    <property type="match status" value="1"/>
</dbReference>
<accession>A2A7V7</accession>
<accession>Q6SJQ2</accession>
<protein>
    <recommendedName>
        <fullName>CMRF35-like molecule 6</fullName>
        <shortName>CLM-6</shortName>
    </recommendedName>
    <alternativeName>
        <fullName>CD300 antigen-like family member C</fullName>
    </alternativeName>
    <cdAntigenName>CD300c</cdAntigenName>
</protein>
<gene>
    <name type="primary">Cd300c</name>
    <name type="synonym">Clm6</name>
</gene>
<reference key="1">
    <citation type="journal article" date="2003" name="J. Immunol.">
        <title>CMRF-35-like molecule-1, a novel mouse myeloid receptor, can inhibit osteoclast formation.</title>
        <authorList>
            <person name="Chung D.-H."/>
            <person name="Humphrey M.B."/>
            <person name="Nakamura M.C."/>
            <person name="Ginzinger D.G."/>
            <person name="Seaman W.E."/>
            <person name="Daws M.R."/>
        </authorList>
    </citation>
    <scope>NUCLEOTIDE SEQUENCE [MRNA]</scope>
    <source>
        <strain>C57BL/6J</strain>
    </source>
</reference>
<reference key="2">
    <citation type="journal article" date="2009" name="PLoS Biol.">
        <title>Lineage-specific biology revealed by a finished genome assembly of the mouse.</title>
        <authorList>
            <person name="Church D.M."/>
            <person name="Goodstadt L."/>
            <person name="Hillier L.W."/>
            <person name="Zody M.C."/>
            <person name="Goldstein S."/>
            <person name="She X."/>
            <person name="Bult C.J."/>
            <person name="Agarwala R."/>
            <person name="Cherry J.L."/>
            <person name="DiCuccio M."/>
            <person name="Hlavina W."/>
            <person name="Kapustin Y."/>
            <person name="Meric P."/>
            <person name="Maglott D."/>
            <person name="Birtle Z."/>
            <person name="Marques A.C."/>
            <person name="Graves T."/>
            <person name="Zhou S."/>
            <person name="Teague B."/>
            <person name="Potamousis K."/>
            <person name="Churas C."/>
            <person name="Place M."/>
            <person name="Herschleb J."/>
            <person name="Runnheim R."/>
            <person name="Forrest D."/>
            <person name="Amos-Landgraf J."/>
            <person name="Schwartz D.C."/>
            <person name="Cheng Z."/>
            <person name="Lindblad-Toh K."/>
            <person name="Eichler E.E."/>
            <person name="Ponting C.P."/>
        </authorList>
    </citation>
    <scope>NUCLEOTIDE SEQUENCE [LARGE SCALE GENOMIC DNA]</scope>
    <source>
        <strain>C57BL/6J</strain>
    </source>
</reference>
<proteinExistence type="evidence at transcript level"/>
<feature type="signal peptide" evidence="1">
    <location>
        <begin position="1"/>
        <end position="21"/>
    </location>
</feature>
<feature type="chain" id="PRO_0000320129" description="CMRF35-like molecule 6">
    <location>
        <begin position="22"/>
        <end position="229"/>
    </location>
</feature>
<feature type="topological domain" description="Extracellular" evidence="1">
    <location>
        <begin position="22"/>
        <end position="188"/>
    </location>
</feature>
<feature type="transmembrane region" description="Helical" evidence="1">
    <location>
        <begin position="189"/>
        <end position="209"/>
    </location>
</feature>
<feature type="topological domain" description="Cytoplasmic" evidence="1">
    <location>
        <begin position="210"/>
        <end position="229"/>
    </location>
</feature>
<feature type="domain" description="Ig-like V-type">
    <location>
        <begin position="22"/>
        <end position="126"/>
    </location>
</feature>
<feature type="glycosylation site" description="N-linked (GlcNAc...) asparagine" evidence="1">
    <location>
        <position position="90"/>
    </location>
</feature>
<feature type="glycosylation site" description="N-linked (GlcNAc...) asparagine" evidence="1">
    <location>
        <position position="99"/>
    </location>
</feature>
<feature type="disulfide bond" evidence="2">
    <location>
        <begin position="43"/>
        <end position="110"/>
    </location>
</feature>
<feature type="sequence conflict" description="In Ref. 1; AAR27943." evidence="3" ref="1">
    <original>F</original>
    <variation>V</variation>
    <location>
        <position position="141"/>
    </location>
</feature>
<name>CLM6_MOUSE</name>